<feature type="chain" id="PRO_0000128394" description="Thermosome subunit beta">
    <location>
        <begin position="1"/>
        <end position="538"/>
    </location>
</feature>
<feature type="region of interest" description="Disordered" evidence="2">
    <location>
        <begin position="518"/>
        <end position="538"/>
    </location>
</feature>
<feature type="compositionally biased region" description="Gly residues" evidence="2">
    <location>
        <begin position="528"/>
        <end position="538"/>
    </location>
</feature>
<protein>
    <recommendedName>
        <fullName>Thermosome subunit beta</fullName>
    </recommendedName>
    <alternativeName>
        <fullName>Chaperonin subunit beta</fullName>
    </alternativeName>
    <alternativeName>
        <fullName>Thermosome subunit 2</fullName>
    </alternativeName>
</protein>
<sequence length="538" mass="57885">MAQGQQPILVLPEGTSRYLGRDAQRMNILAGKILAETVRTTLGPKGMDKMLVDSLGDIVVTNDGVTILKEMDIEHPAAKMLVEVAKTQEDEVGDGTTTAVIIAGELLKKAENLLEMEIHPTIIAMGYRQAAEKAQEILDDIAIDASDRDTLMKVAMTAMTGKGTEKAREPLAELIVDAVKQVEEDGEVEKDHIKIEKKEGAAVDDSTLVQGVIIDKERVHPGMPKKVENAKIALLNCPIEVKETEVDAEIRITDPSQMQAFIEQEEQMIRDMVNSIVDTGANVLFCQKGIDDLAQHYLAKAGVLAVRRVKKSDMEKLSKATGANIVTNIEDLSPEDLGEAGVVSEKKISGEEMIFVEECKEPKAVTILVRGSTEHVVSEVERAIEDAIGVVAATVEDGKVVAGGGAPEIEIAKRLKDYADSISGREQLAVSAFAEALEIVPKTLAENAGLDSIDVLVDLRAAHEESTYMGIDVFDGKIVDMKEAGVIEPHRVKKQAIQSAAEAAEMILRIDDVIAASSSGSSEEGMEEMGGMGGMPPM</sequence>
<evidence type="ECO:0000250" key="1"/>
<evidence type="ECO:0000256" key="2">
    <source>
        <dbReference type="SAM" id="MobiDB-lite"/>
    </source>
</evidence>
<evidence type="ECO:0000305" key="3"/>
<accession>O26885</accession>
<gene>
    <name type="primary">thsB</name>
    <name type="ordered locus">MTH_794</name>
</gene>
<name>THSB_METTH</name>
<organism>
    <name type="scientific">Methanothermobacter thermautotrophicus (strain ATCC 29096 / DSM 1053 / JCM 10044 / NBRC 100330 / Delta H)</name>
    <name type="common">Methanobacterium thermoautotrophicum</name>
    <dbReference type="NCBI Taxonomy" id="187420"/>
    <lineage>
        <taxon>Archaea</taxon>
        <taxon>Methanobacteriati</taxon>
        <taxon>Methanobacteriota</taxon>
        <taxon>Methanomada group</taxon>
        <taxon>Methanobacteria</taxon>
        <taxon>Methanobacteriales</taxon>
        <taxon>Methanobacteriaceae</taxon>
        <taxon>Methanothermobacter</taxon>
    </lineage>
</organism>
<comment type="function">
    <text evidence="1">Molecular chaperone; binds unfolded polypeptides in vitro, and has a weak ATPase activity.</text>
</comment>
<comment type="subunit">
    <text evidence="1">Forms a Heterooligomeric complex of two stacked eight-membered rings.</text>
</comment>
<comment type="similarity">
    <text evidence="3">Belongs to the TCP-1 chaperonin family.</text>
</comment>
<dbReference type="EMBL" id="AE000666">
    <property type="protein sequence ID" value="AAB85294.1"/>
    <property type="molecule type" value="Genomic_DNA"/>
</dbReference>
<dbReference type="PIR" id="H69205">
    <property type="entry name" value="H69205"/>
</dbReference>
<dbReference type="SMR" id="O26885"/>
<dbReference type="FunCoup" id="O26885">
    <property type="interactions" value="195"/>
</dbReference>
<dbReference type="STRING" id="187420.MTH_794"/>
<dbReference type="PaxDb" id="187420-MTH_794"/>
<dbReference type="EnsemblBacteria" id="AAB85294">
    <property type="protein sequence ID" value="AAB85294"/>
    <property type="gene ID" value="MTH_794"/>
</dbReference>
<dbReference type="KEGG" id="mth:MTH_794"/>
<dbReference type="PATRIC" id="fig|187420.15.peg.779"/>
<dbReference type="HOGENOM" id="CLU_008891_7_3_2"/>
<dbReference type="InParanoid" id="O26885"/>
<dbReference type="Proteomes" id="UP000005223">
    <property type="component" value="Chromosome"/>
</dbReference>
<dbReference type="GO" id="GO:0005524">
    <property type="term" value="F:ATP binding"/>
    <property type="evidence" value="ECO:0007669"/>
    <property type="project" value="UniProtKB-KW"/>
</dbReference>
<dbReference type="GO" id="GO:0016887">
    <property type="term" value="F:ATP hydrolysis activity"/>
    <property type="evidence" value="ECO:0007669"/>
    <property type="project" value="InterPro"/>
</dbReference>
<dbReference type="GO" id="GO:0140662">
    <property type="term" value="F:ATP-dependent protein folding chaperone"/>
    <property type="evidence" value="ECO:0007669"/>
    <property type="project" value="InterPro"/>
</dbReference>
<dbReference type="GO" id="GO:0051082">
    <property type="term" value="F:unfolded protein binding"/>
    <property type="evidence" value="ECO:0007669"/>
    <property type="project" value="InterPro"/>
</dbReference>
<dbReference type="CDD" id="cd03343">
    <property type="entry name" value="cpn60"/>
    <property type="match status" value="1"/>
</dbReference>
<dbReference type="FunFam" id="1.10.560.10:FF:000017">
    <property type="entry name" value="T-complex protein 1 subunit eta"/>
    <property type="match status" value="1"/>
</dbReference>
<dbReference type="Gene3D" id="3.50.7.10">
    <property type="entry name" value="GroEL"/>
    <property type="match status" value="1"/>
</dbReference>
<dbReference type="Gene3D" id="1.10.560.10">
    <property type="entry name" value="GroEL-like equatorial domain"/>
    <property type="match status" value="1"/>
</dbReference>
<dbReference type="Gene3D" id="3.30.260.10">
    <property type="entry name" value="TCP-1-like chaperonin intermediate domain"/>
    <property type="match status" value="1"/>
</dbReference>
<dbReference type="InterPro" id="IPR017998">
    <property type="entry name" value="Chaperone_TCP-1"/>
</dbReference>
<dbReference type="InterPro" id="IPR002194">
    <property type="entry name" value="Chaperonin_TCP-1_CS"/>
</dbReference>
<dbReference type="InterPro" id="IPR002423">
    <property type="entry name" value="Cpn60/GroEL/TCP-1"/>
</dbReference>
<dbReference type="InterPro" id="IPR027409">
    <property type="entry name" value="GroEL-like_apical_dom_sf"/>
</dbReference>
<dbReference type="InterPro" id="IPR027413">
    <property type="entry name" value="GROEL-like_equatorial_sf"/>
</dbReference>
<dbReference type="InterPro" id="IPR027410">
    <property type="entry name" value="TCP-1-like_intermed_sf"/>
</dbReference>
<dbReference type="InterPro" id="IPR053374">
    <property type="entry name" value="TCP-1_chaperonin"/>
</dbReference>
<dbReference type="InterPro" id="IPR054827">
    <property type="entry name" value="thermosome_alpha"/>
</dbReference>
<dbReference type="InterPro" id="IPR012714">
    <property type="entry name" value="Thermosome_arc"/>
</dbReference>
<dbReference type="NCBIfam" id="NF041082">
    <property type="entry name" value="thermosome_alpha"/>
    <property type="match status" value="1"/>
</dbReference>
<dbReference type="NCBIfam" id="TIGR02339">
    <property type="entry name" value="thermosome_arch"/>
    <property type="match status" value="1"/>
</dbReference>
<dbReference type="NCBIfam" id="NF041083">
    <property type="entry name" value="thermosome_beta"/>
    <property type="match status" value="1"/>
</dbReference>
<dbReference type="PANTHER" id="PTHR11353">
    <property type="entry name" value="CHAPERONIN"/>
    <property type="match status" value="1"/>
</dbReference>
<dbReference type="Pfam" id="PF00118">
    <property type="entry name" value="Cpn60_TCP1"/>
    <property type="match status" value="1"/>
</dbReference>
<dbReference type="PRINTS" id="PR00304">
    <property type="entry name" value="TCOMPLEXTCP1"/>
</dbReference>
<dbReference type="SUPFAM" id="SSF52029">
    <property type="entry name" value="GroEL apical domain-like"/>
    <property type="match status" value="1"/>
</dbReference>
<dbReference type="SUPFAM" id="SSF48592">
    <property type="entry name" value="GroEL equatorial domain-like"/>
    <property type="match status" value="1"/>
</dbReference>
<dbReference type="SUPFAM" id="SSF54849">
    <property type="entry name" value="GroEL-intermediate domain like"/>
    <property type="match status" value="1"/>
</dbReference>
<dbReference type="PROSITE" id="PS00750">
    <property type="entry name" value="TCP1_1"/>
    <property type="match status" value="1"/>
</dbReference>
<dbReference type="PROSITE" id="PS00751">
    <property type="entry name" value="TCP1_2"/>
    <property type="match status" value="1"/>
</dbReference>
<dbReference type="PROSITE" id="PS00995">
    <property type="entry name" value="TCP1_3"/>
    <property type="match status" value="1"/>
</dbReference>
<keyword id="KW-0067">ATP-binding</keyword>
<keyword id="KW-0143">Chaperone</keyword>
<keyword id="KW-0547">Nucleotide-binding</keyword>
<keyword id="KW-1185">Reference proteome</keyword>
<proteinExistence type="inferred from homology"/>
<reference key="1">
    <citation type="journal article" date="1997" name="J. Bacteriol.">
        <title>Complete genome sequence of Methanobacterium thermoautotrophicum deltaH: functional analysis and comparative genomics.</title>
        <authorList>
            <person name="Smith D.R."/>
            <person name="Doucette-Stamm L.A."/>
            <person name="Deloughery C."/>
            <person name="Lee H.-M."/>
            <person name="Dubois J."/>
            <person name="Aldredge T."/>
            <person name="Bashirzadeh R."/>
            <person name="Blakely D."/>
            <person name="Cook R."/>
            <person name="Gilbert K."/>
            <person name="Harrison D."/>
            <person name="Hoang L."/>
            <person name="Keagle P."/>
            <person name="Lumm W."/>
            <person name="Pothier B."/>
            <person name="Qiu D."/>
            <person name="Spadafora R."/>
            <person name="Vicare R."/>
            <person name="Wang Y."/>
            <person name="Wierzbowski J."/>
            <person name="Gibson R."/>
            <person name="Jiwani N."/>
            <person name="Caruso A."/>
            <person name="Bush D."/>
            <person name="Safer H."/>
            <person name="Patwell D."/>
            <person name="Prabhakar S."/>
            <person name="McDougall S."/>
            <person name="Shimer G."/>
            <person name="Goyal A."/>
            <person name="Pietrovski S."/>
            <person name="Church G.M."/>
            <person name="Daniels C.J."/>
            <person name="Mao J.-I."/>
            <person name="Rice P."/>
            <person name="Noelling J."/>
            <person name="Reeve J.N."/>
        </authorList>
    </citation>
    <scope>NUCLEOTIDE SEQUENCE [LARGE SCALE GENOMIC DNA]</scope>
    <source>
        <strain>ATCC 29096 / DSM 1053 / JCM 10044 / NBRC 100330 / Delta H</strain>
    </source>
</reference>